<dbReference type="GO" id="GO:0005576">
    <property type="term" value="C:extracellular region"/>
    <property type="evidence" value="ECO:0007669"/>
    <property type="project" value="UniProtKB-SubCell"/>
</dbReference>
<dbReference type="GO" id="GO:0007218">
    <property type="term" value="P:neuropeptide signaling pathway"/>
    <property type="evidence" value="ECO:0007669"/>
    <property type="project" value="UniProtKB-KW"/>
</dbReference>
<keyword id="KW-0027">Amidation</keyword>
<keyword id="KW-0903">Direct protein sequencing</keyword>
<keyword id="KW-0527">Neuropeptide</keyword>
<keyword id="KW-0964">Secreted</keyword>
<protein>
    <recommendedName>
        <fullName evidence="5">FMRFamide-like neuropeptide LPEQDFMRF-amide</fullName>
    </recommendedName>
</protein>
<evidence type="ECO:0000250" key="1">
    <source>
        <dbReference type="UniProtKB" id="P41855"/>
    </source>
</evidence>
<evidence type="ECO:0000250" key="2">
    <source>
        <dbReference type="UniProtKB" id="P41856"/>
    </source>
</evidence>
<evidence type="ECO:0000255" key="3"/>
<evidence type="ECO:0000269" key="4">
    <source>
    </source>
</evidence>
<evidence type="ECO:0000303" key="5">
    <source>
    </source>
</evidence>
<evidence type="ECO:0000305" key="6"/>
<accession>B3EWK5</accession>
<reference evidence="6" key="1">
    <citation type="journal article" date="2012" name="PLoS ONE">
        <title>Peptidomics of the agriculturally damaging larval stage of the cabbage root fly Delia radicum (Diptera: Anthomyiidae).</title>
        <authorList>
            <person name="Zoephel J."/>
            <person name="Reiher W."/>
            <person name="Rexer K.-H."/>
            <person name="Kahnt J."/>
            <person name="Wegener C."/>
        </authorList>
    </citation>
    <scope>PROTEIN SEQUENCE</scope>
    <scope>TISSUE SPECIFICITY</scope>
    <scope>DEVELOPMENTAL STAGE</scope>
    <scope>MASS SPECTROMETRY</scope>
    <scope>AMIDATION AT PHE-9</scope>
    <source>
        <tissue evidence="4">CNS</tissue>
    </source>
</reference>
<name>FAR9_DELRA</name>
<comment type="function">
    <text evidence="1">FMRFamides and FMRFamide-like peptides are neuropeptides.</text>
</comment>
<comment type="subcellular location">
    <subcellularLocation>
        <location evidence="2">Secreted</location>
    </subcellularLocation>
</comment>
<comment type="tissue specificity">
    <text evidence="4">Expressed in the CNS and thoracic perisympathetic organs (tPSO) but not in the ring gland, midgut or abdominal perisympathetic organs (aPSO) (at protein level).</text>
</comment>
<comment type="developmental stage">
    <text evidence="4">Detected in larvae.</text>
</comment>
<comment type="mass spectrometry"/>
<comment type="similarity">
    <text evidence="3">Belongs to the FARP (FMRFamide related peptide) family.</text>
</comment>
<feature type="peptide" id="PRO_0000419709" description="FMRFamide-like neuropeptide LPEQDFMRF-amide" evidence="4">
    <location>
        <begin position="1"/>
        <end position="9"/>
    </location>
</feature>
<feature type="modified residue" description="Phenylalanine amide" evidence="4">
    <location>
        <position position="9"/>
    </location>
</feature>
<feature type="unsure residue" description="L or I" evidence="4">
    <location>
        <position position="1"/>
    </location>
</feature>
<sequence>LPEQDFMRF</sequence>
<proteinExistence type="evidence at protein level"/>
<organism>
    <name type="scientific">Delia radicum</name>
    <name type="common">Cabbage root fly</name>
    <name type="synonym">Anthomyia brassicae</name>
    <dbReference type="NCBI Taxonomy" id="30064"/>
    <lineage>
        <taxon>Eukaryota</taxon>
        <taxon>Metazoa</taxon>
        <taxon>Ecdysozoa</taxon>
        <taxon>Arthropoda</taxon>
        <taxon>Hexapoda</taxon>
        <taxon>Insecta</taxon>
        <taxon>Pterygota</taxon>
        <taxon>Neoptera</taxon>
        <taxon>Endopterygota</taxon>
        <taxon>Diptera</taxon>
        <taxon>Brachycera</taxon>
        <taxon>Muscomorpha</taxon>
        <taxon>Muscoidea</taxon>
        <taxon>Anthomyiidae</taxon>
        <taxon>Anthomyiinae</taxon>
        <taxon>Delia</taxon>
    </lineage>
</organism>